<name>RRF_ANASK</name>
<reference key="1">
    <citation type="submission" date="2008-08" db="EMBL/GenBank/DDBJ databases">
        <title>Complete sequence of Anaeromyxobacter sp. K.</title>
        <authorList>
            <consortium name="US DOE Joint Genome Institute"/>
            <person name="Lucas S."/>
            <person name="Copeland A."/>
            <person name="Lapidus A."/>
            <person name="Glavina del Rio T."/>
            <person name="Dalin E."/>
            <person name="Tice H."/>
            <person name="Bruce D."/>
            <person name="Goodwin L."/>
            <person name="Pitluck S."/>
            <person name="Saunders E."/>
            <person name="Brettin T."/>
            <person name="Detter J.C."/>
            <person name="Han C."/>
            <person name="Larimer F."/>
            <person name="Land M."/>
            <person name="Hauser L."/>
            <person name="Kyrpides N."/>
            <person name="Ovchinnikiva G."/>
            <person name="Beliaev A."/>
        </authorList>
    </citation>
    <scope>NUCLEOTIDE SEQUENCE [LARGE SCALE GENOMIC DNA]</scope>
    <source>
        <strain>K</strain>
    </source>
</reference>
<sequence length="188" mass="21065">MGTIADDILDDLHGRILKTLDQLRTELAAVRTGRASLHLLDNVRVDYYGTPTPLNQVATLSVPEARLIVVKPWEKSMIPPIEKAIRDGNLGLNPMSDKDLVRVPIPALTEERRKEIVKQVKHKGEEHKIAVRNVRREAKELIEVAEKDGDISGDDAEKALEKMQKETDEGVKKIDEIVAAKEKDVLQV</sequence>
<keyword id="KW-0963">Cytoplasm</keyword>
<keyword id="KW-0648">Protein biosynthesis</keyword>
<gene>
    <name evidence="1" type="primary">frr</name>
    <name type="ordered locus">AnaeK_0292</name>
</gene>
<protein>
    <recommendedName>
        <fullName evidence="1">Ribosome-recycling factor</fullName>
        <shortName evidence="1">RRF</shortName>
    </recommendedName>
    <alternativeName>
        <fullName evidence="1">Ribosome-releasing factor</fullName>
    </alternativeName>
</protein>
<feature type="chain" id="PRO_1000090706" description="Ribosome-recycling factor">
    <location>
        <begin position="1"/>
        <end position="188"/>
    </location>
</feature>
<accession>B4UMC6</accession>
<proteinExistence type="inferred from homology"/>
<evidence type="ECO:0000255" key="1">
    <source>
        <dbReference type="HAMAP-Rule" id="MF_00040"/>
    </source>
</evidence>
<organism>
    <name type="scientific">Anaeromyxobacter sp. (strain K)</name>
    <dbReference type="NCBI Taxonomy" id="447217"/>
    <lineage>
        <taxon>Bacteria</taxon>
        <taxon>Pseudomonadati</taxon>
        <taxon>Myxococcota</taxon>
        <taxon>Myxococcia</taxon>
        <taxon>Myxococcales</taxon>
        <taxon>Cystobacterineae</taxon>
        <taxon>Anaeromyxobacteraceae</taxon>
        <taxon>Anaeromyxobacter</taxon>
    </lineage>
</organism>
<dbReference type="EMBL" id="CP001131">
    <property type="protein sequence ID" value="ACG71534.1"/>
    <property type="molecule type" value="Genomic_DNA"/>
</dbReference>
<dbReference type="RefSeq" id="WP_012524369.1">
    <property type="nucleotide sequence ID" value="NC_011145.1"/>
</dbReference>
<dbReference type="SMR" id="B4UMC6"/>
<dbReference type="KEGG" id="ank:AnaeK_0292"/>
<dbReference type="HOGENOM" id="CLU_073981_2_0_7"/>
<dbReference type="OrthoDB" id="9804006at2"/>
<dbReference type="Proteomes" id="UP000001871">
    <property type="component" value="Chromosome"/>
</dbReference>
<dbReference type="GO" id="GO:0005829">
    <property type="term" value="C:cytosol"/>
    <property type="evidence" value="ECO:0007669"/>
    <property type="project" value="GOC"/>
</dbReference>
<dbReference type="GO" id="GO:0043023">
    <property type="term" value="F:ribosomal large subunit binding"/>
    <property type="evidence" value="ECO:0007669"/>
    <property type="project" value="TreeGrafter"/>
</dbReference>
<dbReference type="GO" id="GO:0002184">
    <property type="term" value="P:cytoplasmic translational termination"/>
    <property type="evidence" value="ECO:0007669"/>
    <property type="project" value="TreeGrafter"/>
</dbReference>
<dbReference type="CDD" id="cd00520">
    <property type="entry name" value="RRF"/>
    <property type="match status" value="1"/>
</dbReference>
<dbReference type="FunFam" id="1.10.132.20:FF:000001">
    <property type="entry name" value="Ribosome-recycling factor"/>
    <property type="match status" value="1"/>
</dbReference>
<dbReference type="FunFam" id="3.30.1360.40:FF:000001">
    <property type="entry name" value="Ribosome-recycling factor"/>
    <property type="match status" value="1"/>
</dbReference>
<dbReference type="Gene3D" id="3.30.1360.40">
    <property type="match status" value="1"/>
</dbReference>
<dbReference type="Gene3D" id="1.10.132.20">
    <property type="entry name" value="Ribosome-recycling factor"/>
    <property type="match status" value="1"/>
</dbReference>
<dbReference type="HAMAP" id="MF_00040">
    <property type="entry name" value="RRF"/>
    <property type="match status" value="1"/>
</dbReference>
<dbReference type="InterPro" id="IPR002661">
    <property type="entry name" value="Ribosome_recyc_fac"/>
</dbReference>
<dbReference type="InterPro" id="IPR023584">
    <property type="entry name" value="Ribosome_recyc_fac_dom"/>
</dbReference>
<dbReference type="InterPro" id="IPR036191">
    <property type="entry name" value="RRF_sf"/>
</dbReference>
<dbReference type="NCBIfam" id="TIGR00496">
    <property type="entry name" value="frr"/>
    <property type="match status" value="1"/>
</dbReference>
<dbReference type="PANTHER" id="PTHR20982:SF3">
    <property type="entry name" value="MITOCHONDRIAL RIBOSOME RECYCLING FACTOR PSEUDO 1"/>
    <property type="match status" value="1"/>
</dbReference>
<dbReference type="PANTHER" id="PTHR20982">
    <property type="entry name" value="RIBOSOME RECYCLING FACTOR"/>
    <property type="match status" value="1"/>
</dbReference>
<dbReference type="Pfam" id="PF01765">
    <property type="entry name" value="RRF"/>
    <property type="match status" value="1"/>
</dbReference>
<dbReference type="SUPFAM" id="SSF55194">
    <property type="entry name" value="Ribosome recycling factor, RRF"/>
    <property type="match status" value="1"/>
</dbReference>
<comment type="function">
    <text evidence="1">Responsible for the release of ribosomes from messenger RNA at the termination of protein biosynthesis. May increase the efficiency of translation by recycling ribosomes from one round of translation to another.</text>
</comment>
<comment type="subcellular location">
    <subcellularLocation>
        <location evidence="1">Cytoplasm</location>
    </subcellularLocation>
</comment>
<comment type="similarity">
    <text evidence="1">Belongs to the RRF family.</text>
</comment>